<gene>
    <name type="primary">COX1</name>
    <name type="synonym">COI</name>
    <name type="synonym">COXI</name>
</gene>
<evidence type="ECO:0000250" key="1">
    <source>
        <dbReference type="UniProtKB" id="P00396"/>
    </source>
</evidence>
<evidence type="ECO:0000250" key="2">
    <source>
        <dbReference type="UniProtKB" id="P00401"/>
    </source>
</evidence>
<evidence type="ECO:0000255" key="3"/>
<evidence type="ECO:0000305" key="4"/>
<accession>P08681</accession>
<sequence>MRWLYSTSHKDIGLLYLVFAFFGGLLGTSLSMLIRYELALPGRGLLDGNGQLYNVIITGHGIIMLLFMVMPALFGGFGNWLLPIMIGAPDMAFPRLNNISFWLNPPALALLLLSTLVEQGPGTGWTAYPPLSVQHSGTSVDLAILSLHLNGLSSILGAVNMLVTVAGLRAPGMKLLHMPLFVWAIALTAVLVILAVPVLAAALVMLLTDRNINTAYFCESGDLILYQHLFWFFGHPEVYILILPAFGIVSQVVSFFSQKPVFGLTGMICAMGAISLLGFIVWAHHMFTVGLDLDTVAYFTSATMIIAVPTGMKIFSWMATIYSGRVWFTTPMWFAVGFICLFTLGGVTGVVLANAGVDMLVHDTYYVVAHFHYVLSMGAVFGIFAGVYFWGNLITGLGYHEGRAMVHFWLLFIGVNLTFFPQHFLGLAGMPRRMFDYADCFAGWNAVSSFGASISFISVIVFATTFQEAVRTVPRTATTLEWVLLATPAHHALSQVPVLRTASSH</sequence>
<comment type="function">
    <text evidence="2">Component of the cytochrome c oxidase, the last enzyme in the mitochondrial electron transport chain which drives oxidative phosphorylation. The respiratory chain contains 3 multisubunit complexes succinate dehydrogenase (complex II, CII), ubiquinol-cytochrome c oxidoreductase (cytochrome b-c1 complex, complex III, CIII) and cytochrome c oxidase (complex IV, CIV), that cooperate to transfer electrons derived from NADH and succinate to molecular oxygen, creating an electrochemical gradient over the inner membrane that drives transmembrane transport and the ATP synthase. Cytochrome c oxidase is the component of the respiratory chain that catalyzes the reduction of oxygen to water. Electrons originating from reduced cytochrome c in the intermembrane space (IMS) are transferred via the dinuclear copper A center (CU(A)) of subunit 2 and heme A of subunit 1 to the active site in subunit 1, a binuclear center (BNC) formed by heme A3 and copper B (CU(B)). The BNC reduces molecular oxygen to 2 water molecules using 4 electrons from cytochrome c in the IMS and 4 protons from the mitochondrial matrix.</text>
</comment>
<comment type="catalytic activity">
    <reaction evidence="2">
        <text>4 Fe(II)-[cytochrome c] + O2 + 8 H(+)(in) = 4 Fe(III)-[cytochrome c] + 2 H2O + 4 H(+)(out)</text>
        <dbReference type="Rhea" id="RHEA:11436"/>
        <dbReference type="Rhea" id="RHEA-COMP:10350"/>
        <dbReference type="Rhea" id="RHEA-COMP:14399"/>
        <dbReference type="ChEBI" id="CHEBI:15377"/>
        <dbReference type="ChEBI" id="CHEBI:15378"/>
        <dbReference type="ChEBI" id="CHEBI:15379"/>
        <dbReference type="ChEBI" id="CHEBI:29033"/>
        <dbReference type="ChEBI" id="CHEBI:29034"/>
        <dbReference type="EC" id="7.1.1.9"/>
    </reaction>
    <physiologicalReaction direction="left-to-right" evidence="2">
        <dbReference type="Rhea" id="RHEA:11437"/>
    </physiologicalReaction>
</comment>
<comment type="cofactor">
    <cofactor evidence="2">
        <name>heme</name>
        <dbReference type="ChEBI" id="CHEBI:30413"/>
    </cofactor>
    <text evidence="2">Binds 2 heme A groups non-covalently per subunit.</text>
</comment>
<comment type="cofactor">
    <cofactor evidence="2">
        <name>Cu cation</name>
        <dbReference type="ChEBI" id="CHEBI:23378"/>
    </cofactor>
    <text evidence="2">Binds a copper B center.</text>
</comment>
<comment type="pathway">
    <text evidence="2">Energy metabolism; oxidative phosphorylation.</text>
</comment>
<comment type="subunit">
    <text evidence="2">Component of the cytochrome c oxidase (complex IV, CIV), a multisubunit enzyme composed of a catalytic core of 3 subunits and several supernumerary subunits. The complex exists as a monomer or a dimer and forms supercomplexes (SCs) in the inner mitochondrial membrane with ubiquinol-cytochrome c oxidoreductase (cytochrome b-c1 complex, complex III, CIII).</text>
</comment>
<comment type="subcellular location">
    <subcellularLocation>
        <location evidence="2">Mitochondrion inner membrane</location>
        <topology evidence="2">Multi-pass membrane protein</topology>
    </subcellularLocation>
</comment>
<comment type="similarity">
    <text evidence="4">Belongs to the heme-copper respiratory oxidase family.</text>
</comment>
<proteinExistence type="evidence at protein level"/>
<name>COX1_CHLRE</name>
<dbReference type="EC" id="7.1.1.9"/>
<dbReference type="EMBL" id="U03843">
    <property type="protein sequence ID" value="AAB93443.1"/>
    <property type="molecule type" value="Genomic_DNA"/>
</dbReference>
<dbReference type="EMBL" id="X54860">
    <property type="protein sequence ID" value="CAA38642.1"/>
    <property type="molecule type" value="Genomic_DNA"/>
</dbReference>
<dbReference type="EMBL" id="X66484">
    <property type="protein sequence ID" value="CAA47114.1"/>
    <property type="molecule type" value="Genomic_DNA"/>
</dbReference>
<dbReference type="EMBL" id="X03464">
    <property type="protein sequence ID" value="CAA27180.1"/>
    <property type="molecule type" value="Genomic_DNA"/>
</dbReference>
<dbReference type="PIR" id="A24707">
    <property type="entry name" value="A24707"/>
</dbReference>
<dbReference type="RefSeq" id="NP_042567.1">
    <property type="nucleotide sequence ID" value="NC_001638.1"/>
</dbReference>
<dbReference type="PDB" id="9F5X">
    <property type="method" value="EM"/>
    <property type="resolution" value="2.82 A"/>
    <property type="chains" value="2A/3A=1-504"/>
</dbReference>
<dbReference type="PDB" id="9F60">
    <property type="method" value="EM"/>
    <property type="resolution" value="2.39 A"/>
    <property type="chains" value="2A=1-505"/>
</dbReference>
<dbReference type="PDB" id="9F61">
    <property type="method" value="EM"/>
    <property type="resolution" value="2.55 A"/>
    <property type="chains" value="3A=1-505"/>
</dbReference>
<dbReference type="PDB" id="9F62">
    <property type="method" value="EM"/>
    <property type="resolution" value="5.44 A"/>
    <property type="chains" value="2A/3A/4A/7A/8A/9A=1-505"/>
</dbReference>
<dbReference type="PDBsum" id="9F5X"/>
<dbReference type="PDBsum" id="9F60"/>
<dbReference type="PDBsum" id="9F61"/>
<dbReference type="PDBsum" id="9F62"/>
<dbReference type="EMDB" id="EMD-50202"/>
<dbReference type="EMDB" id="EMD-50205"/>
<dbReference type="EMDB" id="EMD-50206"/>
<dbReference type="EMDB" id="EMD-50210"/>
<dbReference type="SMR" id="P08681"/>
<dbReference type="PaxDb" id="3055-AAB93443"/>
<dbReference type="GeneID" id="801495"/>
<dbReference type="KEGG" id="cre:ChrepMp04"/>
<dbReference type="eggNOG" id="KOG4769">
    <property type="taxonomic scope" value="Eukaryota"/>
</dbReference>
<dbReference type="HOGENOM" id="CLU_011899_7_3_1"/>
<dbReference type="BioCyc" id="CHLAMY:CHREPMP04-MONOMER"/>
<dbReference type="UniPathway" id="UPA00705"/>
<dbReference type="GO" id="GO:0005743">
    <property type="term" value="C:mitochondrial inner membrane"/>
    <property type="evidence" value="ECO:0007669"/>
    <property type="project" value="UniProtKB-SubCell"/>
</dbReference>
<dbReference type="GO" id="GO:0045277">
    <property type="term" value="C:respiratory chain complex IV"/>
    <property type="evidence" value="ECO:0007669"/>
    <property type="project" value="InterPro"/>
</dbReference>
<dbReference type="GO" id="GO:0004129">
    <property type="term" value="F:cytochrome-c oxidase activity"/>
    <property type="evidence" value="ECO:0007669"/>
    <property type="project" value="UniProtKB-EC"/>
</dbReference>
<dbReference type="GO" id="GO:0020037">
    <property type="term" value="F:heme binding"/>
    <property type="evidence" value="ECO:0007669"/>
    <property type="project" value="InterPro"/>
</dbReference>
<dbReference type="GO" id="GO:0046872">
    <property type="term" value="F:metal ion binding"/>
    <property type="evidence" value="ECO:0007669"/>
    <property type="project" value="UniProtKB-KW"/>
</dbReference>
<dbReference type="GO" id="GO:0006119">
    <property type="term" value="P:oxidative phosphorylation"/>
    <property type="evidence" value="ECO:0007669"/>
    <property type="project" value="UniProtKB-UniPathway"/>
</dbReference>
<dbReference type="CDD" id="cd01663">
    <property type="entry name" value="Cyt_c_Oxidase_I"/>
    <property type="match status" value="1"/>
</dbReference>
<dbReference type="FunFam" id="1.20.210.10:FF:000004">
    <property type="entry name" value="Cytochrome c oxidase subunit 1"/>
    <property type="match status" value="1"/>
</dbReference>
<dbReference type="Gene3D" id="1.20.210.10">
    <property type="entry name" value="Cytochrome c oxidase-like, subunit I domain"/>
    <property type="match status" value="1"/>
</dbReference>
<dbReference type="InterPro" id="IPR023616">
    <property type="entry name" value="Cyt_c_oxase-like_su1_dom"/>
</dbReference>
<dbReference type="InterPro" id="IPR036927">
    <property type="entry name" value="Cyt_c_oxase-like_su1_sf"/>
</dbReference>
<dbReference type="InterPro" id="IPR000883">
    <property type="entry name" value="Cyt_C_Oxase_1"/>
</dbReference>
<dbReference type="InterPro" id="IPR023615">
    <property type="entry name" value="Cyt_c_Oxase_su1_BS"/>
</dbReference>
<dbReference type="InterPro" id="IPR033944">
    <property type="entry name" value="Cyt_c_oxase_su1_dom"/>
</dbReference>
<dbReference type="PANTHER" id="PTHR10422">
    <property type="entry name" value="CYTOCHROME C OXIDASE SUBUNIT 1"/>
    <property type="match status" value="1"/>
</dbReference>
<dbReference type="PANTHER" id="PTHR10422:SF18">
    <property type="entry name" value="CYTOCHROME C OXIDASE SUBUNIT 1"/>
    <property type="match status" value="1"/>
</dbReference>
<dbReference type="Pfam" id="PF00115">
    <property type="entry name" value="COX1"/>
    <property type="match status" value="1"/>
</dbReference>
<dbReference type="PRINTS" id="PR01165">
    <property type="entry name" value="CYCOXIDASEI"/>
</dbReference>
<dbReference type="SUPFAM" id="SSF81442">
    <property type="entry name" value="Cytochrome c oxidase subunit I-like"/>
    <property type="match status" value="1"/>
</dbReference>
<dbReference type="PROSITE" id="PS50855">
    <property type="entry name" value="COX1"/>
    <property type="match status" value="1"/>
</dbReference>
<dbReference type="PROSITE" id="PS00077">
    <property type="entry name" value="COX1_CUB"/>
    <property type="match status" value="1"/>
</dbReference>
<reference key="1">
    <citation type="journal article" date="1986" name="Nucleic Acids Res.">
        <title>Nucleotide sequence of a protein coding region in Chlamydomonas reinhardtii mitochondrial DNA.</title>
        <authorList>
            <person name="Boer P.H."/>
            <person name="Gray M.W."/>
        </authorList>
    </citation>
    <scope>NUCLEOTIDE SEQUENCE [GENOMIC DNA]</scope>
    <source>
        <strain>CW15-2</strain>
    </source>
</reference>
<reference key="2">
    <citation type="journal article" date="1991" name="Curr. Genet.">
        <title>Short dispersed repeats localized in spacer regions of Chlamydomonas reinhardtii mitochondrial DNA.</title>
        <authorList>
            <person name="Boer P.H."/>
            <person name="Gray M.W."/>
        </authorList>
    </citation>
    <scope>NUCLEOTIDE SEQUENCE [GENOMIC DNA]</scope>
    <source>
        <strain>cw15</strain>
    </source>
</reference>
<reference key="3">
    <citation type="journal article" date="1985" name="Mol. Gen. Genet.">
        <title>Mitochondrial DNA of Chlamydomonas reinhardtii: sequence and arrangement of URF5 and the gene for cytochrome oxidase subunit I.</title>
        <authorList>
            <person name="Vahrenholz C."/>
            <person name="Pratje E."/>
            <person name="Michaelis G."/>
            <person name="Dujon B."/>
        </authorList>
    </citation>
    <scope>NUCLEOTIDE SEQUENCE [GENOMIC DNA]</scope>
    <source>
        <strain>cw15</strain>
    </source>
</reference>
<reference key="4">
    <citation type="journal article" date="1985" name="Proc. Natl. Acad. Sci. U.S.A.">
        <title>Genes for respiratory chain proteins and ribosomal RNAs are present on a 16-kilobase-pair DNA species from Chlamydomonas reinhardtii mitochondria.</title>
        <authorList>
            <person name="Boer P.H."/>
            <person name="Bonen L."/>
            <person name="Lee R.W."/>
            <person name="Gray M.W."/>
        </authorList>
    </citation>
    <scope>NUCLEOTIDE SEQUENCE [GENOMIC DNA] OF 79-234</scope>
</reference>
<reference key="5">
    <citation type="journal article" date="1986" name="EMBO J.">
        <title>The URF 5 gene of Chlamydomonas reinhardtii mitochondria: DNA sequence and mode of transcription.</title>
        <authorList>
            <person name="Boer P.H."/>
            <person name="Gray M.W."/>
        </authorList>
    </citation>
    <scope>NUCLEOTIDE SEQUENCE [GENOMIC DNA] OF 1-30</scope>
</reference>
<protein>
    <recommendedName>
        <fullName>Cytochrome c oxidase subunit 1</fullName>
        <ecNumber>7.1.1.9</ecNumber>
    </recommendedName>
    <alternativeName>
        <fullName>Cytochrome c oxidase polypeptide I</fullName>
    </alternativeName>
</protein>
<organism>
    <name type="scientific">Chlamydomonas reinhardtii</name>
    <name type="common">Chlamydomonas smithii</name>
    <dbReference type="NCBI Taxonomy" id="3055"/>
    <lineage>
        <taxon>Eukaryota</taxon>
        <taxon>Viridiplantae</taxon>
        <taxon>Chlorophyta</taxon>
        <taxon>core chlorophytes</taxon>
        <taxon>Chlorophyceae</taxon>
        <taxon>CS clade</taxon>
        <taxon>Chlamydomonadales</taxon>
        <taxon>Chlamydomonadaceae</taxon>
        <taxon>Chlamydomonas</taxon>
    </lineage>
</organism>
<feature type="chain" id="PRO_0000183307" description="Cytochrome c oxidase subunit 1">
    <location>
        <begin position="1"/>
        <end position="505"/>
    </location>
</feature>
<feature type="transmembrane region" description="Helical" evidence="3">
    <location>
        <begin position="14"/>
        <end position="34"/>
    </location>
</feature>
<feature type="transmembrane region" description="Helical" evidence="3">
    <location>
        <begin position="55"/>
        <end position="75"/>
    </location>
</feature>
<feature type="transmembrane region" description="Helical" evidence="3">
    <location>
        <begin position="98"/>
        <end position="118"/>
    </location>
</feature>
<feature type="transmembrane region" description="Helical" evidence="3">
    <location>
        <begin position="143"/>
        <end position="163"/>
    </location>
</feature>
<feature type="transmembrane region" description="Helical" evidence="3">
    <location>
        <begin position="180"/>
        <end position="200"/>
    </location>
</feature>
<feature type="transmembrane region" description="Helical" evidence="3">
    <location>
        <begin position="229"/>
        <end position="249"/>
    </location>
</feature>
<feature type="transmembrane region" description="Helical" evidence="3">
    <location>
        <begin position="261"/>
        <end position="281"/>
    </location>
</feature>
<feature type="transmembrane region" description="Helical" evidence="3">
    <location>
        <begin position="302"/>
        <end position="322"/>
    </location>
</feature>
<feature type="transmembrane region" description="Helical" evidence="3">
    <location>
        <begin position="332"/>
        <end position="352"/>
    </location>
</feature>
<feature type="transmembrane region" description="Helical" evidence="3">
    <location>
        <begin position="374"/>
        <end position="394"/>
    </location>
</feature>
<feature type="transmembrane region" description="Helical" evidence="3">
    <location>
        <begin position="408"/>
        <end position="428"/>
    </location>
</feature>
<feature type="transmembrane region" description="Helical" evidence="3">
    <location>
        <begin position="446"/>
        <end position="466"/>
    </location>
</feature>
<feature type="binding site" evidence="2">
    <location>
        <position position="37"/>
    </location>
    <ligand>
        <name>Ca(2+)</name>
        <dbReference type="ChEBI" id="CHEBI:29108"/>
    </ligand>
</feature>
<feature type="binding site" evidence="2">
    <location>
        <position position="42"/>
    </location>
    <ligand>
        <name>Ca(2+)</name>
        <dbReference type="ChEBI" id="CHEBI:29108"/>
    </ligand>
</feature>
<feature type="binding site" description="axial binding residue" evidence="2">
    <location>
        <position position="60"/>
    </location>
    <ligand>
        <name>Fe(II)-heme a</name>
        <dbReference type="ChEBI" id="CHEBI:61715"/>
        <note>low-spin</note>
    </ligand>
    <ligandPart>
        <name>Fe</name>
        <dbReference type="ChEBI" id="CHEBI:18248"/>
    </ligandPart>
</feature>
<feature type="binding site" evidence="2">
    <location>
        <position position="235"/>
    </location>
    <ligand>
        <name>Cu cation</name>
        <dbReference type="ChEBI" id="CHEBI:23378"/>
        <label>B</label>
    </ligand>
</feature>
<feature type="binding site" evidence="4">
    <location>
        <position position="239"/>
    </location>
    <ligand>
        <name>Cu cation</name>
        <dbReference type="ChEBI" id="CHEBI:23378"/>
        <label>B</label>
    </ligand>
</feature>
<feature type="binding site" evidence="1">
    <location>
        <position position="239"/>
    </location>
    <ligand>
        <name>O2</name>
        <dbReference type="ChEBI" id="CHEBI:15379"/>
    </ligand>
</feature>
<feature type="binding site" evidence="2">
    <location>
        <position position="284"/>
    </location>
    <ligand>
        <name>Cu cation</name>
        <dbReference type="ChEBI" id="CHEBI:23378"/>
        <label>B</label>
    </ligand>
</feature>
<feature type="binding site" evidence="2">
    <location>
        <position position="285"/>
    </location>
    <ligand>
        <name>Cu cation</name>
        <dbReference type="ChEBI" id="CHEBI:23378"/>
        <label>B</label>
    </ligand>
</feature>
<feature type="binding site" evidence="2">
    <location>
        <position position="362"/>
    </location>
    <ligand>
        <name>Mg(2+)</name>
        <dbReference type="ChEBI" id="CHEBI:18420"/>
        <note>ligand shared with subunit 2</note>
    </ligand>
</feature>
<feature type="binding site" evidence="2">
    <location>
        <position position="363"/>
    </location>
    <ligand>
        <name>Mg(2+)</name>
        <dbReference type="ChEBI" id="CHEBI:18420"/>
        <note>ligand shared with subunit 2</note>
    </ligand>
</feature>
<feature type="binding site" description="axial binding residue" evidence="2">
    <location>
        <position position="370"/>
    </location>
    <ligand>
        <name>heme a3</name>
        <dbReference type="ChEBI" id="CHEBI:83282"/>
        <note>high-spin</note>
    </ligand>
    <ligandPart>
        <name>Fe</name>
        <dbReference type="ChEBI" id="CHEBI:18248"/>
    </ligandPart>
</feature>
<feature type="binding site" description="axial binding residue" evidence="2">
    <location>
        <position position="372"/>
    </location>
    <ligand>
        <name>Fe(II)-heme a</name>
        <dbReference type="ChEBI" id="CHEBI:61715"/>
        <note>low-spin</note>
    </ligand>
    <ligandPart>
        <name>Fe</name>
        <dbReference type="ChEBI" id="CHEBI:18248"/>
    </ligandPart>
</feature>
<feature type="cross-link" description="1'-histidyl-3'-tyrosine (His-Tyr)" evidence="2">
    <location>
        <begin position="235"/>
        <end position="239"/>
    </location>
</feature>
<feature type="sequence conflict" description="In Ref. 2; CAA47114." evidence="4" ref="2">
    <original>Y</original>
    <variation>C</variation>
    <location>
        <position position="388"/>
    </location>
</feature>
<feature type="sequence conflict" description="In Ref. 2; CAA47114." evidence="4" ref="2">
    <original>A</original>
    <variation>V</variation>
    <location>
        <position position="428"/>
    </location>
</feature>
<geneLocation type="mitochondrion"/>
<keyword id="KW-0002">3D-structure</keyword>
<keyword id="KW-0106">Calcium</keyword>
<keyword id="KW-0186">Copper</keyword>
<keyword id="KW-0249">Electron transport</keyword>
<keyword id="KW-0349">Heme</keyword>
<keyword id="KW-0408">Iron</keyword>
<keyword id="KW-0460">Magnesium</keyword>
<keyword id="KW-0472">Membrane</keyword>
<keyword id="KW-0479">Metal-binding</keyword>
<keyword id="KW-0496">Mitochondrion</keyword>
<keyword id="KW-0999">Mitochondrion inner membrane</keyword>
<keyword id="KW-0679">Respiratory chain</keyword>
<keyword id="KW-1278">Translocase</keyword>
<keyword id="KW-0812">Transmembrane</keyword>
<keyword id="KW-1133">Transmembrane helix</keyword>
<keyword id="KW-0813">Transport</keyword>